<organism>
    <name type="scientific">Dystacta alticeps</name>
    <name type="common">Praying mantis</name>
    <dbReference type="NCBI Taxonomy" id="444697"/>
    <lineage>
        <taxon>Eukaryota</taxon>
        <taxon>Metazoa</taxon>
        <taxon>Ecdysozoa</taxon>
        <taxon>Arthropoda</taxon>
        <taxon>Hexapoda</taxon>
        <taxon>Insecta</taxon>
        <taxon>Pterygota</taxon>
        <taxon>Neoptera</taxon>
        <taxon>Polyneoptera</taxon>
        <taxon>Dictyoptera</taxon>
        <taxon>Mantodea</taxon>
        <taxon>Eumantodea</taxon>
        <taxon>Mantoidea</taxon>
        <taxon>Mantidae</taxon>
        <taxon>Dystactinae</taxon>
        <taxon>Dystacta</taxon>
    </lineage>
</organism>
<sequence>QGLIPFPRV</sequence>
<reference evidence="6" key="1">
    <citation type="journal article" date="2010" name="Peptides">
        <title>CAPA-peptides of praying mantids (Mantodea).</title>
        <authorList>
            <person name="Koehler R."/>
            <person name="Predel R."/>
        </authorList>
    </citation>
    <scope>PROTEIN SEQUENCE</scope>
    <scope>MASS SPECTROMETRY</scope>
    <scope>PYROGLUTAMATE FORMATION AT GLN-1</scope>
    <scope>AMIDATION AT VAL-9</scope>
    <source>
        <tissue evidence="4">Abdominal perisympathetic organs</tissue>
    </source>
</reference>
<name>PVK1_DYSAL</name>
<proteinExistence type="evidence at protein level"/>
<keyword id="KW-0027">Amidation</keyword>
<keyword id="KW-0903">Direct protein sequencing</keyword>
<keyword id="KW-0527">Neuropeptide</keyword>
<keyword id="KW-0873">Pyrrolidone carboxylic acid</keyword>
<keyword id="KW-0964">Secreted</keyword>
<comment type="function">
    <text evidence="1">Mediates visceral muscle contractile activity (myotropic activity).</text>
</comment>
<comment type="subcellular location">
    <subcellularLocation>
        <location evidence="2">Secreted</location>
    </subcellularLocation>
</comment>
<comment type="mass spectrometry"/>
<comment type="mass spectrometry">
    <text>With pyroglutamate at Gln-1.</text>
</comment>
<comment type="similarity">
    <text evidence="3">Belongs to the periviscerokinin family.</text>
</comment>
<protein>
    <recommendedName>
        <fullName evidence="5">Periviscerokinin-1</fullName>
    </recommendedName>
</protein>
<accession>P86679</accession>
<evidence type="ECO:0000250" key="1">
    <source>
        <dbReference type="UniProtKB" id="P83923"/>
    </source>
</evidence>
<evidence type="ECO:0000250" key="2">
    <source>
        <dbReference type="UniProtKB" id="P84375"/>
    </source>
</evidence>
<evidence type="ECO:0000255" key="3"/>
<evidence type="ECO:0000269" key="4">
    <source>
    </source>
</evidence>
<evidence type="ECO:0000303" key="5">
    <source>
    </source>
</evidence>
<evidence type="ECO:0000305" key="6"/>
<dbReference type="GO" id="GO:0005576">
    <property type="term" value="C:extracellular region"/>
    <property type="evidence" value="ECO:0007669"/>
    <property type="project" value="UniProtKB-SubCell"/>
</dbReference>
<dbReference type="GO" id="GO:0007218">
    <property type="term" value="P:neuropeptide signaling pathway"/>
    <property type="evidence" value="ECO:0007669"/>
    <property type="project" value="UniProtKB-KW"/>
</dbReference>
<dbReference type="InterPro" id="IPR013231">
    <property type="entry name" value="Periviscerokinin"/>
</dbReference>
<dbReference type="Pfam" id="PF08259">
    <property type="entry name" value="Periviscerokin"/>
    <property type="match status" value="1"/>
</dbReference>
<feature type="peptide" id="PRO_0000395565" description="Periviscerokinin-1" evidence="4">
    <location>
        <begin position="1"/>
        <end position="9"/>
    </location>
</feature>
<feature type="modified residue" description="Pyrrolidone carboxylic acid; partial" evidence="4">
    <location>
        <position position="1"/>
    </location>
</feature>
<feature type="modified residue" description="Valine amide" evidence="4">
    <location>
        <position position="9"/>
    </location>
</feature>
<feature type="unsure residue" description="L or I" evidence="4">
    <location>
        <position position="3"/>
    </location>
</feature>
<feature type="unsure residue" description="I or L" evidence="4">
    <location>
        <position position="4"/>
    </location>
</feature>